<organism>
    <name type="scientific">Oncorhynchus mykiss</name>
    <name type="common">Rainbow trout</name>
    <name type="synonym">Salmo gairdneri</name>
    <dbReference type="NCBI Taxonomy" id="8022"/>
    <lineage>
        <taxon>Eukaryota</taxon>
        <taxon>Metazoa</taxon>
        <taxon>Chordata</taxon>
        <taxon>Craniata</taxon>
        <taxon>Vertebrata</taxon>
        <taxon>Euteleostomi</taxon>
        <taxon>Actinopterygii</taxon>
        <taxon>Neopterygii</taxon>
        <taxon>Teleostei</taxon>
        <taxon>Protacanthopterygii</taxon>
        <taxon>Salmoniformes</taxon>
        <taxon>Salmonidae</taxon>
        <taxon>Salmoninae</taxon>
        <taxon>Oncorhynchus</taxon>
    </lineage>
</organism>
<feature type="chain" id="PRO_0000097519" description="Protein lin-52 homolog">
    <location>
        <begin position="1"/>
        <end position="112"/>
    </location>
</feature>
<accession>Q6X4M3</accession>
<comment type="function">
    <text evidence="3">May be involved in retinal development.</text>
</comment>
<comment type="subunit">
    <text evidence="1">Component of the DREAM complex.</text>
</comment>
<comment type="tissue specificity">
    <text evidence="2">Expressed in the brain, liver and retina. Highly expressed in the retinal ganglion cell and inner nuclear layers at the parr stage. Expressed at a lower level in inner segments of some retinal photoreceptors.</text>
</comment>
<comment type="developmental stage">
    <text evidence="2">Down-regulated in the retina at smoltification, the metamorphic transformation from a parr to a molt.</text>
</comment>
<comment type="similarity">
    <text evidence="4">Belongs to the lin-52 family.</text>
</comment>
<evidence type="ECO:0000250" key="1"/>
<evidence type="ECO:0000269" key="2">
    <source>
    </source>
</evidence>
<evidence type="ECO:0000303" key="3">
    <source>
    </source>
</evidence>
<evidence type="ECO:0000305" key="4"/>
<evidence type="ECO:0000312" key="5">
    <source>
        <dbReference type="EMBL" id="AAP94225.1"/>
    </source>
</evidence>
<keyword id="KW-0217">Developmental protein</keyword>
<name>LIN52_ONCMY</name>
<reference evidence="4 5" key="1">
    <citation type="journal article" date="2003" name="Comp. Biochem. Physiol.">
        <title>Identification of a unique transcript down-regulated in the retina of rainbow trout (Oncorhynchus mykiss) at smoltification.</title>
        <authorList>
            <person name="Dann S.G."/>
            <person name="Allison W.T."/>
            <person name="Levin D.B."/>
            <person name="Hawryshyn C.W."/>
        </authorList>
    </citation>
    <scope>NUCLEOTIDE SEQUENCE [MRNA]</scope>
    <scope>FUNCTION</scope>
    <scope>TISSUE SPECIFICITY</scope>
    <scope>DEVELOPMENTAL STAGE</scope>
    <source>
        <tissue evidence="5">Retina</tissue>
    </source>
</reference>
<gene>
    <name type="primary">lin52</name>
</gene>
<proteinExistence type="evidence at transcript level"/>
<dbReference type="EMBL" id="AY255832">
    <property type="protein sequence ID" value="AAP94225.1"/>
    <property type="molecule type" value="mRNA"/>
</dbReference>
<dbReference type="RefSeq" id="NP_001117925.1">
    <property type="nucleotide sequence ID" value="NM_001124453.1"/>
</dbReference>
<dbReference type="SMR" id="Q6X4M3"/>
<dbReference type="GeneID" id="100136175"/>
<dbReference type="KEGG" id="omy:100136175"/>
<dbReference type="OrthoDB" id="5834362at2759"/>
<dbReference type="Proteomes" id="UP000694395">
    <property type="component" value="Unplaced"/>
</dbReference>
<dbReference type="GO" id="GO:0070176">
    <property type="term" value="C:DRM complex"/>
    <property type="evidence" value="ECO:0007669"/>
    <property type="project" value="InterPro"/>
</dbReference>
<dbReference type="GO" id="GO:0006355">
    <property type="term" value="P:regulation of DNA-templated transcription"/>
    <property type="evidence" value="ECO:0007669"/>
    <property type="project" value="InterPro"/>
</dbReference>
<dbReference type="InterPro" id="IPR018737">
    <property type="entry name" value="DREAM_LIN52"/>
</dbReference>
<dbReference type="PANTHER" id="PTHR31489">
    <property type="entry name" value="LIN52 FAMILY MEMBER"/>
    <property type="match status" value="1"/>
</dbReference>
<dbReference type="PANTHER" id="PTHR31489:SF2">
    <property type="entry name" value="PROTEIN LIN-52 HOMOLOG"/>
    <property type="match status" value="1"/>
</dbReference>
<dbReference type="Pfam" id="PF10044">
    <property type="entry name" value="LIN52"/>
    <property type="match status" value="1"/>
</dbReference>
<protein>
    <recommendedName>
        <fullName>Protein lin-52 homolog</fullName>
    </recommendedName>
    <alternativeName>
        <fullName>12.5 kDa retinal tissue protein</fullName>
    </alternativeName>
    <alternativeName>
        <fullName>Rtp12.5</fullName>
    </alternativeName>
</protein>
<sequence length="112" mass="12485">MASPNGGDDFESSLLSFEKLDRASPDLWPEQLPGVADFAASCKNPITNSPPKWMAELESEDIEMLKKLGSLTTANLMEKVKGLQNLAYQLGLEESREMTRGKFLNILERPKK</sequence>